<feature type="chain" id="PRO_1000184806" description="ATP synthase subunit delta">
    <location>
        <begin position="1"/>
        <end position="178"/>
    </location>
</feature>
<organism>
    <name type="scientific">Streptococcus agalactiae serotype V (strain ATCC BAA-611 / 2603 V/R)</name>
    <dbReference type="NCBI Taxonomy" id="208435"/>
    <lineage>
        <taxon>Bacteria</taxon>
        <taxon>Bacillati</taxon>
        <taxon>Bacillota</taxon>
        <taxon>Bacilli</taxon>
        <taxon>Lactobacillales</taxon>
        <taxon>Streptococcaceae</taxon>
        <taxon>Streptococcus</taxon>
    </lineage>
</organism>
<comment type="function">
    <text evidence="1">F(1)F(0) ATP synthase produces ATP from ADP in the presence of a proton or sodium gradient. F-type ATPases consist of two structural domains, F(1) containing the extramembraneous catalytic core and F(0) containing the membrane proton channel, linked together by a central stalk and a peripheral stalk. During catalysis, ATP synthesis in the catalytic domain of F(1) is coupled via a rotary mechanism of the central stalk subunits to proton translocation.</text>
</comment>
<comment type="function">
    <text evidence="1">This protein is part of the stalk that links CF(0) to CF(1). It either transmits conformational changes from CF(0) to CF(1) or is implicated in proton conduction.</text>
</comment>
<comment type="subunit">
    <text evidence="1">F-type ATPases have 2 components, F(1) - the catalytic core - and F(0) - the membrane proton channel. F(1) has five subunits: alpha(3), beta(3), gamma(1), delta(1), epsilon(1). F(0) has three main subunits: a(1), b(2) and c(10-14). The alpha and beta chains form an alternating ring which encloses part of the gamma chain. F(1) is attached to F(0) by a central stalk formed by the gamma and epsilon chains, while a peripheral stalk is formed by the delta and b chains.</text>
</comment>
<comment type="subcellular location">
    <subcellularLocation>
        <location evidence="1">Cell membrane</location>
        <topology evidence="1">Peripheral membrane protein</topology>
    </subcellularLocation>
</comment>
<comment type="similarity">
    <text evidence="1">Belongs to the ATPase delta chain family.</text>
</comment>
<evidence type="ECO:0000255" key="1">
    <source>
        <dbReference type="HAMAP-Rule" id="MF_01416"/>
    </source>
</evidence>
<reference key="1">
    <citation type="journal article" date="2002" name="Proc. Natl. Acad. Sci. U.S.A.">
        <title>Complete genome sequence and comparative genomic analysis of an emerging human pathogen, serotype V Streptococcus agalactiae.</title>
        <authorList>
            <person name="Tettelin H."/>
            <person name="Masignani V."/>
            <person name="Cieslewicz M.J."/>
            <person name="Eisen J.A."/>
            <person name="Peterson S.N."/>
            <person name="Wessels M.R."/>
            <person name="Paulsen I.T."/>
            <person name="Nelson K.E."/>
            <person name="Margarit I."/>
            <person name="Read T.D."/>
            <person name="Madoff L.C."/>
            <person name="Wolf A.M."/>
            <person name="Beanan M.J."/>
            <person name="Brinkac L.M."/>
            <person name="Daugherty S.C."/>
            <person name="DeBoy R.T."/>
            <person name="Durkin A.S."/>
            <person name="Kolonay J.F."/>
            <person name="Madupu R."/>
            <person name="Lewis M.R."/>
            <person name="Radune D."/>
            <person name="Fedorova N.B."/>
            <person name="Scanlan D."/>
            <person name="Khouri H.M."/>
            <person name="Mulligan S."/>
            <person name="Carty H.A."/>
            <person name="Cline R.T."/>
            <person name="Van Aken S.E."/>
            <person name="Gill J."/>
            <person name="Scarselli M."/>
            <person name="Mora M."/>
            <person name="Iacobini E.T."/>
            <person name="Brettoni C."/>
            <person name="Galli G."/>
            <person name="Mariani M."/>
            <person name="Vegni F."/>
            <person name="Maione D."/>
            <person name="Rinaudo D."/>
            <person name="Rappuoli R."/>
            <person name="Telford J.L."/>
            <person name="Kasper D.L."/>
            <person name="Grandi G."/>
            <person name="Fraser C.M."/>
        </authorList>
    </citation>
    <scope>NUCLEOTIDE SEQUENCE [LARGE SCALE GENOMIC DNA]</scope>
    <source>
        <strain>ATCC BAA-611 / 2603 V/R</strain>
    </source>
</reference>
<name>ATPD_STRA5</name>
<keyword id="KW-0066">ATP synthesis</keyword>
<keyword id="KW-1003">Cell membrane</keyword>
<keyword id="KW-0139">CF(1)</keyword>
<keyword id="KW-0375">Hydrogen ion transport</keyword>
<keyword id="KW-0406">Ion transport</keyword>
<keyword id="KW-0472">Membrane</keyword>
<keyword id="KW-1185">Reference proteome</keyword>
<keyword id="KW-0813">Transport</keyword>
<proteinExistence type="inferred from homology"/>
<protein>
    <recommendedName>
        <fullName evidence="1">ATP synthase subunit delta</fullName>
    </recommendedName>
    <alternativeName>
        <fullName evidence="1">ATP synthase F(1) sector subunit delta</fullName>
    </alternativeName>
    <alternativeName>
        <fullName evidence="1">F-type ATPase subunit delta</fullName>
        <shortName evidence="1">F-ATPase subunit delta</shortName>
    </alternativeName>
</protein>
<sequence length="178" mass="20023">MNKKTQALIEQYSKSLVEVAIEHKIVEKIQQEVAALIDIFETSELEGVLSSLAVSHDEKQHFVKTLQTSCSTYLVNFLEVIVQNEREALLYPILKSVDQELIKVNGQYPIQITTAVALSPEQKERLFDIAKTKLALPNGQLVEHIDPSIVGGFVVNANNKVIDASVRNQLHQFKMKLK</sequence>
<gene>
    <name evidence="1" type="primary">atpH</name>
    <name type="ordered locus">SAG0860</name>
</gene>
<dbReference type="EMBL" id="AE009948">
    <property type="protein sequence ID" value="AAM99746.1"/>
    <property type="molecule type" value="Genomic_DNA"/>
</dbReference>
<dbReference type="RefSeq" id="NP_687874.1">
    <property type="nucleotide sequence ID" value="NC_004116.1"/>
</dbReference>
<dbReference type="RefSeq" id="WP_001036760.1">
    <property type="nucleotide sequence ID" value="NC_004116.1"/>
</dbReference>
<dbReference type="SMR" id="Q8E075"/>
<dbReference type="STRING" id="208435.SAG0860"/>
<dbReference type="KEGG" id="sag:SAG0860"/>
<dbReference type="PATRIC" id="fig|208435.3.peg.867"/>
<dbReference type="HOGENOM" id="CLU_085114_1_2_9"/>
<dbReference type="OrthoDB" id="9802471at2"/>
<dbReference type="Proteomes" id="UP000000821">
    <property type="component" value="Chromosome"/>
</dbReference>
<dbReference type="GO" id="GO:0005886">
    <property type="term" value="C:plasma membrane"/>
    <property type="evidence" value="ECO:0007669"/>
    <property type="project" value="UniProtKB-SubCell"/>
</dbReference>
<dbReference type="GO" id="GO:0045259">
    <property type="term" value="C:proton-transporting ATP synthase complex"/>
    <property type="evidence" value="ECO:0007669"/>
    <property type="project" value="UniProtKB-KW"/>
</dbReference>
<dbReference type="GO" id="GO:0046933">
    <property type="term" value="F:proton-transporting ATP synthase activity, rotational mechanism"/>
    <property type="evidence" value="ECO:0007669"/>
    <property type="project" value="UniProtKB-UniRule"/>
</dbReference>
<dbReference type="Gene3D" id="1.10.520.20">
    <property type="entry name" value="N-terminal domain of the delta subunit of the F1F0-ATP synthase"/>
    <property type="match status" value="1"/>
</dbReference>
<dbReference type="HAMAP" id="MF_01416">
    <property type="entry name" value="ATP_synth_delta_bact"/>
    <property type="match status" value="1"/>
</dbReference>
<dbReference type="InterPro" id="IPR026015">
    <property type="entry name" value="ATP_synth_OSCP/delta_N_sf"/>
</dbReference>
<dbReference type="InterPro" id="IPR000711">
    <property type="entry name" value="ATPase_OSCP/dsu"/>
</dbReference>
<dbReference type="NCBIfam" id="TIGR01145">
    <property type="entry name" value="ATP_synt_delta"/>
    <property type="match status" value="1"/>
</dbReference>
<dbReference type="NCBIfam" id="NF004401">
    <property type="entry name" value="PRK05758.2-1"/>
    <property type="match status" value="1"/>
</dbReference>
<dbReference type="PANTHER" id="PTHR11910">
    <property type="entry name" value="ATP SYNTHASE DELTA CHAIN"/>
    <property type="match status" value="1"/>
</dbReference>
<dbReference type="Pfam" id="PF00213">
    <property type="entry name" value="OSCP"/>
    <property type="match status" value="1"/>
</dbReference>
<dbReference type="PRINTS" id="PR00125">
    <property type="entry name" value="ATPASEDELTA"/>
</dbReference>
<dbReference type="SUPFAM" id="SSF47928">
    <property type="entry name" value="N-terminal domain of the delta subunit of the F1F0-ATP synthase"/>
    <property type="match status" value="1"/>
</dbReference>
<accession>Q8E075</accession>